<accession>Q97Z43</accession>
<feature type="chain" id="PRO_0000334212" description="Probable ribonuclease FAU-1">
    <location>
        <begin position="1"/>
        <end position="424"/>
    </location>
</feature>
<proteinExistence type="inferred from homology"/>
<dbReference type="EC" id="3.1.26.-" evidence="1"/>
<dbReference type="EMBL" id="AE006641">
    <property type="protein sequence ID" value="AAK41353.1"/>
    <property type="molecule type" value="Genomic_DNA"/>
</dbReference>
<dbReference type="PIR" id="B99262">
    <property type="entry name" value="B99262"/>
</dbReference>
<dbReference type="RefSeq" id="WP_009989727.1">
    <property type="nucleotide sequence ID" value="NC_002754.1"/>
</dbReference>
<dbReference type="SMR" id="Q97Z43"/>
<dbReference type="STRING" id="273057.SSO1093"/>
<dbReference type="PaxDb" id="273057-SSO1093"/>
<dbReference type="EnsemblBacteria" id="AAK41353">
    <property type="protein sequence ID" value="AAK41353"/>
    <property type="gene ID" value="SSO1093"/>
</dbReference>
<dbReference type="KEGG" id="sso:SSO1093"/>
<dbReference type="PATRIC" id="fig|273057.12.peg.1091"/>
<dbReference type="eggNOG" id="arCOG04307">
    <property type="taxonomic scope" value="Archaea"/>
</dbReference>
<dbReference type="HOGENOM" id="CLU_044303_0_0_2"/>
<dbReference type="InParanoid" id="Q97Z43"/>
<dbReference type="PhylomeDB" id="Q97Z43"/>
<dbReference type="Proteomes" id="UP000001974">
    <property type="component" value="Chromosome"/>
</dbReference>
<dbReference type="GO" id="GO:0035925">
    <property type="term" value="F:mRNA 3'-UTR AU-rich region binding"/>
    <property type="evidence" value="ECO:0007669"/>
    <property type="project" value="UniProtKB-UniRule"/>
</dbReference>
<dbReference type="GO" id="GO:0016891">
    <property type="term" value="F:RNA endonuclease activity, producing 5'-phosphomonoesters"/>
    <property type="evidence" value="ECO:0007669"/>
    <property type="project" value="UniProtKB-UniRule"/>
</dbReference>
<dbReference type="GO" id="GO:0006364">
    <property type="term" value="P:rRNA processing"/>
    <property type="evidence" value="ECO:0007669"/>
    <property type="project" value="UniProtKB-UniRule"/>
</dbReference>
<dbReference type="Gene3D" id="2.40.380.10">
    <property type="entry name" value="FomD-like"/>
    <property type="match status" value="1"/>
</dbReference>
<dbReference type="HAMAP" id="MF_01910">
    <property type="entry name" value="RNA_binding_AU_1"/>
    <property type="match status" value="1"/>
</dbReference>
<dbReference type="InterPro" id="IPR007295">
    <property type="entry name" value="DUF402"/>
</dbReference>
<dbReference type="InterPro" id="IPR035930">
    <property type="entry name" value="FomD-like_sf"/>
</dbReference>
<dbReference type="InterPro" id="IPR050212">
    <property type="entry name" value="Ntdp-like"/>
</dbReference>
<dbReference type="InterPro" id="IPR016730">
    <property type="entry name" value="RNA-bd_FAU-1"/>
</dbReference>
<dbReference type="PANTHER" id="PTHR39159">
    <property type="match status" value="1"/>
</dbReference>
<dbReference type="PANTHER" id="PTHR39159:SF1">
    <property type="entry name" value="UPF0374 PROTEIN YGAC"/>
    <property type="match status" value="1"/>
</dbReference>
<dbReference type="Pfam" id="PF04167">
    <property type="entry name" value="DUF402"/>
    <property type="match status" value="1"/>
</dbReference>
<dbReference type="PIRSF" id="PIRSF018644">
    <property type="entry name" value="RNA-binding_FAU-1"/>
    <property type="match status" value="1"/>
</dbReference>
<dbReference type="SUPFAM" id="SSF159234">
    <property type="entry name" value="FomD-like"/>
    <property type="match status" value="1"/>
</dbReference>
<gene>
    <name evidence="1" type="primary">fau-1</name>
    <name type="ordered locus">SSO1093</name>
</gene>
<organism>
    <name type="scientific">Saccharolobus solfataricus (strain ATCC 35092 / DSM 1617 / JCM 11322 / P2)</name>
    <name type="common">Sulfolobus solfataricus</name>
    <dbReference type="NCBI Taxonomy" id="273057"/>
    <lineage>
        <taxon>Archaea</taxon>
        <taxon>Thermoproteota</taxon>
        <taxon>Thermoprotei</taxon>
        <taxon>Sulfolobales</taxon>
        <taxon>Sulfolobaceae</taxon>
        <taxon>Saccharolobus</taxon>
    </lineage>
</organism>
<name>FAU1_SACS2</name>
<sequence length="424" mass="49257">MKGRVRIRGIYATALTSIFSSLSYEIVQQSVEISERFMQEINNLSADITIKDFEDDRGKIIVMGNGIIEDDLRNVFKYSFHWRSPVKLYSVIEIDESCTYANFKVEPCLREGIVIKPPYDGKIILSETKAVSKYAIVWRGKGITTFSEHIVDEEEKMRLLTLSLPLNRKGYNVKWRSNAKYVALNELKEDLERLILRYENREFRDQGEDFYLITLSLPDKLYLDEVRKNVVDTVKYHHMLKLSYNREVDSLEKDKKGSLGKLLEGLISDFLKIEHIKADGKVIYLRGGKVIEKEVNDNGYRIVLRREFEGNGILDGIGKKIEEGDYDIVEYNSDKWYQIHKYYSGIDNSLKGVYINISTPPELLRGKIRYLDLEIDIAIRDSEIALLDEDELNKKSIYMPSSLVNKAKEVVNYLINRIQQNKLS</sequence>
<evidence type="ECO:0000255" key="1">
    <source>
        <dbReference type="HAMAP-Rule" id="MF_01910"/>
    </source>
</evidence>
<comment type="function">
    <text evidence="1">Probable RNase involved in rRNA stability through maturation and/or degradation of precursor rRNAs. Binds to RNA in loop regions with AU-rich sequences.</text>
</comment>
<comment type="similarity">
    <text evidence="1">Belongs to the FAU-1 family.</text>
</comment>
<keyword id="KW-0255">Endonuclease</keyword>
<keyword id="KW-0378">Hydrolase</keyword>
<keyword id="KW-0540">Nuclease</keyword>
<keyword id="KW-1185">Reference proteome</keyword>
<keyword id="KW-0694">RNA-binding</keyword>
<keyword id="KW-0698">rRNA processing</keyword>
<reference key="1">
    <citation type="journal article" date="2001" name="Proc. Natl. Acad. Sci. U.S.A.">
        <title>The complete genome of the crenarchaeon Sulfolobus solfataricus P2.</title>
        <authorList>
            <person name="She Q."/>
            <person name="Singh R.K."/>
            <person name="Confalonieri F."/>
            <person name="Zivanovic Y."/>
            <person name="Allard G."/>
            <person name="Awayez M.J."/>
            <person name="Chan-Weiher C.C.-Y."/>
            <person name="Clausen I.G."/>
            <person name="Curtis B.A."/>
            <person name="De Moors A."/>
            <person name="Erauso G."/>
            <person name="Fletcher C."/>
            <person name="Gordon P.M.K."/>
            <person name="Heikamp-de Jong I."/>
            <person name="Jeffries A.C."/>
            <person name="Kozera C.J."/>
            <person name="Medina N."/>
            <person name="Peng X."/>
            <person name="Thi-Ngoc H.P."/>
            <person name="Redder P."/>
            <person name="Schenk M.E."/>
            <person name="Theriault C."/>
            <person name="Tolstrup N."/>
            <person name="Charlebois R.L."/>
            <person name="Doolittle W.F."/>
            <person name="Duguet M."/>
            <person name="Gaasterland T."/>
            <person name="Garrett R.A."/>
            <person name="Ragan M.A."/>
            <person name="Sensen C.W."/>
            <person name="Van der Oost J."/>
        </authorList>
    </citation>
    <scope>NUCLEOTIDE SEQUENCE [LARGE SCALE GENOMIC DNA]</scope>
    <source>
        <strain>ATCC 35092 / DSM 1617 / JCM 11322 / P2</strain>
    </source>
</reference>
<protein>
    <recommendedName>
        <fullName evidence="1">Probable ribonuclease FAU-1</fullName>
        <ecNumber evidence="1">3.1.26.-</ecNumber>
    </recommendedName>
    <alternativeName>
        <fullName evidence="1">RNA-binding protein FAU-1</fullName>
    </alternativeName>
</protein>